<dbReference type="EMBL" id="CP000151">
    <property type="protein sequence ID" value="ABB07045.1"/>
    <property type="molecule type" value="Genomic_DNA"/>
</dbReference>
<dbReference type="RefSeq" id="WP_006477195.1">
    <property type="nucleotide sequence ID" value="NZ_LDWP01000105.1"/>
</dbReference>
<dbReference type="SMR" id="Q39KH1"/>
<dbReference type="GeneID" id="93193455"/>
<dbReference type="KEGG" id="bur:Bcep18194_A3443"/>
<dbReference type="HOGENOM" id="CLU_072226_1_1_4"/>
<dbReference type="Proteomes" id="UP000002705">
    <property type="component" value="Chromosome 1"/>
</dbReference>
<dbReference type="GO" id="GO:0015935">
    <property type="term" value="C:small ribosomal subunit"/>
    <property type="evidence" value="ECO:0007669"/>
    <property type="project" value="InterPro"/>
</dbReference>
<dbReference type="GO" id="GO:0019843">
    <property type="term" value="F:rRNA binding"/>
    <property type="evidence" value="ECO:0007669"/>
    <property type="project" value="UniProtKB-UniRule"/>
</dbReference>
<dbReference type="GO" id="GO:0003735">
    <property type="term" value="F:structural constituent of ribosome"/>
    <property type="evidence" value="ECO:0007669"/>
    <property type="project" value="InterPro"/>
</dbReference>
<dbReference type="GO" id="GO:0000049">
    <property type="term" value="F:tRNA binding"/>
    <property type="evidence" value="ECO:0007669"/>
    <property type="project" value="UniProtKB-UniRule"/>
</dbReference>
<dbReference type="GO" id="GO:0006412">
    <property type="term" value="P:translation"/>
    <property type="evidence" value="ECO:0007669"/>
    <property type="project" value="UniProtKB-UniRule"/>
</dbReference>
<dbReference type="CDD" id="cd14869">
    <property type="entry name" value="uS7_Bacteria"/>
    <property type="match status" value="1"/>
</dbReference>
<dbReference type="FunFam" id="1.10.455.10:FF:000001">
    <property type="entry name" value="30S ribosomal protein S7"/>
    <property type="match status" value="1"/>
</dbReference>
<dbReference type="Gene3D" id="1.10.455.10">
    <property type="entry name" value="Ribosomal protein S7 domain"/>
    <property type="match status" value="1"/>
</dbReference>
<dbReference type="HAMAP" id="MF_00480_B">
    <property type="entry name" value="Ribosomal_uS7_B"/>
    <property type="match status" value="1"/>
</dbReference>
<dbReference type="InterPro" id="IPR000235">
    <property type="entry name" value="Ribosomal_uS7"/>
</dbReference>
<dbReference type="InterPro" id="IPR005717">
    <property type="entry name" value="Ribosomal_uS7_bac/org-type"/>
</dbReference>
<dbReference type="InterPro" id="IPR020606">
    <property type="entry name" value="Ribosomal_uS7_CS"/>
</dbReference>
<dbReference type="InterPro" id="IPR023798">
    <property type="entry name" value="Ribosomal_uS7_dom"/>
</dbReference>
<dbReference type="InterPro" id="IPR036823">
    <property type="entry name" value="Ribosomal_uS7_dom_sf"/>
</dbReference>
<dbReference type="NCBIfam" id="TIGR01029">
    <property type="entry name" value="rpsG_bact"/>
    <property type="match status" value="1"/>
</dbReference>
<dbReference type="PANTHER" id="PTHR11205">
    <property type="entry name" value="RIBOSOMAL PROTEIN S7"/>
    <property type="match status" value="1"/>
</dbReference>
<dbReference type="Pfam" id="PF00177">
    <property type="entry name" value="Ribosomal_S7"/>
    <property type="match status" value="1"/>
</dbReference>
<dbReference type="PIRSF" id="PIRSF002122">
    <property type="entry name" value="RPS7p_RPS7a_RPS5e_RPS7o"/>
    <property type="match status" value="1"/>
</dbReference>
<dbReference type="SUPFAM" id="SSF47973">
    <property type="entry name" value="Ribosomal protein S7"/>
    <property type="match status" value="1"/>
</dbReference>
<dbReference type="PROSITE" id="PS00052">
    <property type="entry name" value="RIBOSOMAL_S7"/>
    <property type="match status" value="1"/>
</dbReference>
<accession>Q39KH1</accession>
<name>RS7_BURL3</name>
<proteinExistence type="inferred from homology"/>
<reference key="1">
    <citation type="submission" date="2005-10" db="EMBL/GenBank/DDBJ databases">
        <title>Complete sequence of chromosome 1 of Burkholderia sp. 383.</title>
        <authorList>
            <consortium name="US DOE Joint Genome Institute"/>
            <person name="Copeland A."/>
            <person name="Lucas S."/>
            <person name="Lapidus A."/>
            <person name="Barry K."/>
            <person name="Detter J.C."/>
            <person name="Glavina T."/>
            <person name="Hammon N."/>
            <person name="Israni S."/>
            <person name="Pitluck S."/>
            <person name="Chain P."/>
            <person name="Malfatti S."/>
            <person name="Shin M."/>
            <person name="Vergez L."/>
            <person name="Schmutz J."/>
            <person name="Larimer F."/>
            <person name="Land M."/>
            <person name="Kyrpides N."/>
            <person name="Lykidis A."/>
            <person name="Richardson P."/>
        </authorList>
    </citation>
    <scope>NUCLEOTIDE SEQUENCE [LARGE SCALE GENOMIC DNA]</scope>
    <source>
        <strain>ATCC 17760 / DSM 23089 / LMG 22485 / NCIMB 9086 / R18194 / 383</strain>
    </source>
</reference>
<protein>
    <recommendedName>
        <fullName evidence="1">Small ribosomal subunit protein uS7</fullName>
    </recommendedName>
    <alternativeName>
        <fullName evidence="2">30S ribosomal protein S7</fullName>
    </alternativeName>
</protein>
<organism>
    <name type="scientific">Burkholderia lata (strain ATCC 17760 / DSM 23089 / LMG 22485 / NCIMB 9086 / R18194 / 383)</name>
    <dbReference type="NCBI Taxonomy" id="482957"/>
    <lineage>
        <taxon>Bacteria</taxon>
        <taxon>Pseudomonadati</taxon>
        <taxon>Pseudomonadota</taxon>
        <taxon>Betaproteobacteria</taxon>
        <taxon>Burkholderiales</taxon>
        <taxon>Burkholderiaceae</taxon>
        <taxon>Burkholderia</taxon>
        <taxon>Burkholderia cepacia complex</taxon>
    </lineage>
</organism>
<keyword id="KW-0687">Ribonucleoprotein</keyword>
<keyword id="KW-0689">Ribosomal protein</keyword>
<keyword id="KW-0694">RNA-binding</keyword>
<keyword id="KW-0699">rRNA-binding</keyword>
<keyword id="KW-0820">tRNA-binding</keyword>
<sequence length="156" mass="17670">MPRRREVPKREVLPDPKFGNVDVAKFMNMLMLSGKKSVAERIVYGAFEQIQTKGGKDPLEVFTVALNNVKPVVEVKSRRVGGANYQVPVEVRPSRRMALAMRWLREAAKKRSEKSMALRLAGELSEAAEGRGGAMKKRDEVHRMAEANRAFSHFRF</sequence>
<gene>
    <name evidence="1" type="primary">rpsG</name>
    <name type="ordered locus">Bcep18194_A3443</name>
</gene>
<comment type="function">
    <text evidence="1">One of the primary rRNA binding proteins, it binds directly to 16S rRNA where it nucleates assembly of the head domain of the 30S subunit. Is located at the subunit interface close to the decoding center, probably blocks exit of the E-site tRNA.</text>
</comment>
<comment type="subunit">
    <text evidence="1">Part of the 30S ribosomal subunit. Contacts proteins S9 and S11.</text>
</comment>
<comment type="similarity">
    <text evidence="1">Belongs to the universal ribosomal protein uS7 family.</text>
</comment>
<evidence type="ECO:0000255" key="1">
    <source>
        <dbReference type="HAMAP-Rule" id="MF_00480"/>
    </source>
</evidence>
<evidence type="ECO:0000305" key="2"/>
<feature type="chain" id="PRO_0000226487" description="Small ribosomal subunit protein uS7">
    <location>
        <begin position="1"/>
        <end position="156"/>
    </location>
</feature>